<reference key="1">
    <citation type="journal article" date="2006" name="Proc. Natl. Acad. Sci. U.S.A.">
        <title>Evolution of sensory complexity recorded in a myxobacterial genome.</title>
        <authorList>
            <person name="Goldman B.S."/>
            <person name="Nierman W.C."/>
            <person name="Kaiser D."/>
            <person name="Slater S.C."/>
            <person name="Durkin A.S."/>
            <person name="Eisen J.A."/>
            <person name="Ronning C.M."/>
            <person name="Barbazuk W.B."/>
            <person name="Blanchard M."/>
            <person name="Field C."/>
            <person name="Halling C."/>
            <person name="Hinkle G."/>
            <person name="Iartchuk O."/>
            <person name="Kim H.S."/>
            <person name="Mackenzie C."/>
            <person name="Madupu R."/>
            <person name="Miller N."/>
            <person name="Shvartsbeyn A."/>
            <person name="Sullivan S.A."/>
            <person name="Vaudin M."/>
            <person name="Wiegand R."/>
            <person name="Kaplan H.B."/>
        </authorList>
    </citation>
    <scope>NUCLEOTIDE SEQUENCE [LARGE SCALE GENOMIC DNA]</scope>
    <source>
        <strain>DK1622</strain>
    </source>
</reference>
<protein>
    <recommendedName>
        <fullName evidence="1">6,7-dimethyl-8-ribityllumazine synthase</fullName>
        <shortName evidence="1">DMRL synthase</shortName>
        <shortName evidence="1">LS</shortName>
        <shortName evidence="1">Lumazine synthase</shortName>
        <ecNumber evidence="1">2.5.1.78</ecNumber>
    </recommendedName>
</protein>
<proteinExistence type="inferred from homology"/>
<sequence>MPRYFDGDFLPPKGRFAICVARFNGFITEELAKGAVDTLVRHGVADADIDVYRCPGTYELPGLVRRVTETRQYVGVITLGAVIRGGTPHFDYVAGECAKGIGAVAFEAAAATPAKTVTFGVLTTDTVEQAIDRAGVKAGNKGAEATLACIEMVNLYAKMSATDGRKA</sequence>
<name>RISB_MYXXD</name>
<gene>
    <name evidence="1" type="primary">ribH</name>
    <name type="ordered locus">MXAN_4762</name>
</gene>
<evidence type="ECO:0000255" key="1">
    <source>
        <dbReference type="HAMAP-Rule" id="MF_00178"/>
    </source>
</evidence>
<dbReference type="EC" id="2.5.1.78" evidence="1"/>
<dbReference type="EMBL" id="CP000113">
    <property type="protein sequence ID" value="ABF88946.1"/>
    <property type="molecule type" value="Genomic_DNA"/>
</dbReference>
<dbReference type="RefSeq" id="WP_011554749.1">
    <property type="nucleotide sequence ID" value="NC_008095.1"/>
</dbReference>
<dbReference type="SMR" id="Q1D349"/>
<dbReference type="STRING" id="246197.MXAN_4762"/>
<dbReference type="EnsemblBacteria" id="ABF88946">
    <property type="protein sequence ID" value="ABF88946"/>
    <property type="gene ID" value="MXAN_4762"/>
</dbReference>
<dbReference type="GeneID" id="41362061"/>
<dbReference type="KEGG" id="mxa:MXAN_4762"/>
<dbReference type="eggNOG" id="COG0054">
    <property type="taxonomic scope" value="Bacteria"/>
</dbReference>
<dbReference type="HOGENOM" id="CLU_089358_1_1_7"/>
<dbReference type="OrthoDB" id="9809709at2"/>
<dbReference type="UniPathway" id="UPA00275">
    <property type="reaction ID" value="UER00404"/>
</dbReference>
<dbReference type="Proteomes" id="UP000002402">
    <property type="component" value="Chromosome"/>
</dbReference>
<dbReference type="GO" id="GO:0005829">
    <property type="term" value="C:cytosol"/>
    <property type="evidence" value="ECO:0007669"/>
    <property type="project" value="TreeGrafter"/>
</dbReference>
<dbReference type="GO" id="GO:0009349">
    <property type="term" value="C:riboflavin synthase complex"/>
    <property type="evidence" value="ECO:0007669"/>
    <property type="project" value="InterPro"/>
</dbReference>
<dbReference type="GO" id="GO:0000906">
    <property type="term" value="F:6,7-dimethyl-8-ribityllumazine synthase activity"/>
    <property type="evidence" value="ECO:0007669"/>
    <property type="project" value="UniProtKB-UniRule"/>
</dbReference>
<dbReference type="GO" id="GO:0009231">
    <property type="term" value="P:riboflavin biosynthetic process"/>
    <property type="evidence" value="ECO:0007669"/>
    <property type="project" value="UniProtKB-UniRule"/>
</dbReference>
<dbReference type="CDD" id="cd09209">
    <property type="entry name" value="Lumazine_synthase-I"/>
    <property type="match status" value="1"/>
</dbReference>
<dbReference type="Gene3D" id="3.40.50.960">
    <property type="entry name" value="Lumazine/riboflavin synthase"/>
    <property type="match status" value="1"/>
</dbReference>
<dbReference type="HAMAP" id="MF_00178">
    <property type="entry name" value="Lumazine_synth"/>
    <property type="match status" value="1"/>
</dbReference>
<dbReference type="InterPro" id="IPR034964">
    <property type="entry name" value="LS"/>
</dbReference>
<dbReference type="InterPro" id="IPR002180">
    <property type="entry name" value="LS/RS"/>
</dbReference>
<dbReference type="InterPro" id="IPR036467">
    <property type="entry name" value="LS/RS_sf"/>
</dbReference>
<dbReference type="NCBIfam" id="TIGR00114">
    <property type="entry name" value="lumazine-synth"/>
    <property type="match status" value="1"/>
</dbReference>
<dbReference type="PANTHER" id="PTHR21058:SF0">
    <property type="entry name" value="6,7-DIMETHYL-8-RIBITYLLUMAZINE SYNTHASE"/>
    <property type="match status" value="1"/>
</dbReference>
<dbReference type="PANTHER" id="PTHR21058">
    <property type="entry name" value="6,7-DIMETHYL-8-RIBITYLLUMAZINE SYNTHASE DMRL SYNTHASE LUMAZINE SYNTHASE"/>
    <property type="match status" value="1"/>
</dbReference>
<dbReference type="Pfam" id="PF00885">
    <property type="entry name" value="DMRL_synthase"/>
    <property type="match status" value="1"/>
</dbReference>
<dbReference type="SUPFAM" id="SSF52121">
    <property type="entry name" value="Lumazine synthase"/>
    <property type="match status" value="1"/>
</dbReference>
<keyword id="KW-1185">Reference proteome</keyword>
<keyword id="KW-0686">Riboflavin biosynthesis</keyword>
<keyword id="KW-0808">Transferase</keyword>
<organism>
    <name type="scientific">Myxococcus xanthus (strain DK1622)</name>
    <dbReference type="NCBI Taxonomy" id="246197"/>
    <lineage>
        <taxon>Bacteria</taxon>
        <taxon>Pseudomonadati</taxon>
        <taxon>Myxococcota</taxon>
        <taxon>Myxococcia</taxon>
        <taxon>Myxococcales</taxon>
        <taxon>Cystobacterineae</taxon>
        <taxon>Myxococcaceae</taxon>
        <taxon>Myxococcus</taxon>
    </lineage>
</organism>
<accession>Q1D349</accession>
<comment type="function">
    <text evidence="1">Catalyzes the formation of 6,7-dimethyl-8-ribityllumazine by condensation of 5-amino-6-(D-ribitylamino)uracil with 3,4-dihydroxy-2-butanone 4-phosphate. This is the penultimate step in the biosynthesis of riboflavin.</text>
</comment>
<comment type="catalytic activity">
    <reaction evidence="1">
        <text>(2S)-2-hydroxy-3-oxobutyl phosphate + 5-amino-6-(D-ribitylamino)uracil = 6,7-dimethyl-8-(1-D-ribityl)lumazine + phosphate + 2 H2O + H(+)</text>
        <dbReference type="Rhea" id="RHEA:26152"/>
        <dbReference type="ChEBI" id="CHEBI:15377"/>
        <dbReference type="ChEBI" id="CHEBI:15378"/>
        <dbReference type="ChEBI" id="CHEBI:15934"/>
        <dbReference type="ChEBI" id="CHEBI:43474"/>
        <dbReference type="ChEBI" id="CHEBI:58201"/>
        <dbReference type="ChEBI" id="CHEBI:58830"/>
        <dbReference type="EC" id="2.5.1.78"/>
    </reaction>
</comment>
<comment type="pathway">
    <text evidence="1">Cofactor biosynthesis; riboflavin biosynthesis; riboflavin from 2-hydroxy-3-oxobutyl phosphate and 5-amino-6-(D-ribitylamino)uracil: step 1/2.</text>
</comment>
<comment type="similarity">
    <text evidence="1">Belongs to the DMRL synthase family.</text>
</comment>
<feature type="chain" id="PRO_1000040460" description="6,7-dimethyl-8-ribityllumazine synthase">
    <location>
        <begin position="1"/>
        <end position="167"/>
    </location>
</feature>
<feature type="active site" description="Proton donor" evidence="1">
    <location>
        <position position="89"/>
    </location>
</feature>
<feature type="binding site" evidence="1">
    <location>
        <position position="23"/>
    </location>
    <ligand>
        <name>5-amino-6-(D-ribitylamino)uracil</name>
        <dbReference type="ChEBI" id="CHEBI:15934"/>
    </ligand>
</feature>
<feature type="binding site" evidence="1">
    <location>
        <begin position="57"/>
        <end position="59"/>
    </location>
    <ligand>
        <name>5-amino-6-(D-ribitylamino)uracil</name>
        <dbReference type="ChEBI" id="CHEBI:15934"/>
    </ligand>
</feature>
<feature type="binding site" evidence="1">
    <location>
        <begin position="81"/>
        <end position="83"/>
    </location>
    <ligand>
        <name>5-amino-6-(D-ribitylamino)uracil</name>
        <dbReference type="ChEBI" id="CHEBI:15934"/>
    </ligand>
</feature>
<feature type="binding site" evidence="1">
    <location>
        <begin position="86"/>
        <end position="87"/>
    </location>
    <ligand>
        <name>(2S)-2-hydroxy-3-oxobutyl phosphate</name>
        <dbReference type="ChEBI" id="CHEBI:58830"/>
    </ligand>
</feature>
<feature type="binding site" evidence="1">
    <location>
        <position position="119"/>
    </location>
    <ligand>
        <name>5-amino-6-(D-ribitylamino)uracil</name>
        <dbReference type="ChEBI" id="CHEBI:15934"/>
    </ligand>
</feature>
<feature type="binding site" evidence="1">
    <location>
        <position position="133"/>
    </location>
    <ligand>
        <name>(2S)-2-hydroxy-3-oxobutyl phosphate</name>
        <dbReference type="ChEBI" id="CHEBI:58830"/>
    </ligand>
</feature>